<dbReference type="EMBL" id="AB125102">
    <property type="protein sequence ID" value="BAD05116.1"/>
    <property type="molecule type" value="mRNA"/>
</dbReference>
<dbReference type="RefSeq" id="NP_001002948.1">
    <property type="nucleotide sequence ID" value="NM_001002948.2"/>
</dbReference>
<dbReference type="RefSeq" id="XP_013977886.1">
    <property type="nucleotide sequence ID" value="XM_014122411.1"/>
</dbReference>
<dbReference type="STRING" id="9615.ENSCAFP00000012545"/>
<dbReference type="PaxDb" id="9612-ENSCAFP00000012545"/>
<dbReference type="GeneID" id="403415"/>
<dbReference type="KEGG" id="cfa:403415"/>
<dbReference type="CTD" id="797"/>
<dbReference type="eggNOG" id="ENOG502SQMP">
    <property type="taxonomic scope" value="Eukaryota"/>
</dbReference>
<dbReference type="HOGENOM" id="CLU_122444_1_0_1"/>
<dbReference type="InParanoid" id="Q75V94"/>
<dbReference type="OMA" id="QAFGRKK"/>
<dbReference type="OrthoDB" id="9929923at2759"/>
<dbReference type="TreeFam" id="TF333069"/>
<dbReference type="Proteomes" id="UP000002254">
    <property type="component" value="Unplaced"/>
</dbReference>
<dbReference type="Proteomes" id="UP000694429">
    <property type="component" value="Unplaced"/>
</dbReference>
<dbReference type="Proteomes" id="UP000694542">
    <property type="component" value="Unplaced"/>
</dbReference>
<dbReference type="Proteomes" id="UP000805418">
    <property type="component" value="Unplaced"/>
</dbReference>
<dbReference type="GO" id="GO:0005615">
    <property type="term" value="C:extracellular space"/>
    <property type="evidence" value="ECO:0000318"/>
    <property type="project" value="GO_Central"/>
</dbReference>
<dbReference type="GO" id="GO:0031716">
    <property type="term" value="F:calcitonin receptor binding"/>
    <property type="evidence" value="ECO:0000318"/>
    <property type="project" value="GO_Central"/>
</dbReference>
<dbReference type="GO" id="GO:0005179">
    <property type="term" value="F:hormone activity"/>
    <property type="evidence" value="ECO:0007669"/>
    <property type="project" value="InterPro"/>
</dbReference>
<dbReference type="GO" id="GO:0007189">
    <property type="term" value="P:adenylate cyclase-activating G protein-coupled receptor signaling pathway"/>
    <property type="evidence" value="ECO:0000318"/>
    <property type="project" value="GO_Central"/>
</dbReference>
<dbReference type="GO" id="GO:0051480">
    <property type="term" value="P:regulation of cytosolic calcium ion concentration"/>
    <property type="evidence" value="ECO:0000318"/>
    <property type="project" value="GO_Central"/>
</dbReference>
<dbReference type="Gene3D" id="6.10.250.2190">
    <property type="match status" value="1"/>
</dbReference>
<dbReference type="InterPro" id="IPR021117">
    <property type="entry name" value="Calcitonin-like"/>
</dbReference>
<dbReference type="InterPro" id="IPR021116">
    <property type="entry name" value="Calcitonin/adrenomedullin"/>
</dbReference>
<dbReference type="InterPro" id="IPR018360">
    <property type="entry name" value="Calcitonin_CS"/>
</dbReference>
<dbReference type="InterPro" id="IPR015476">
    <property type="entry name" value="Calcitonin_gene-rel_peptide"/>
</dbReference>
<dbReference type="InterPro" id="IPR001693">
    <property type="entry name" value="Calcitonin_peptide-like"/>
</dbReference>
<dbReference type="PANTHER" id="PTHR10505:SF13">
    <property type="entry name" value="CALCITONIN GENE-RELATED PEPTIDE 1"/>
    <property type="match status" value="1"/>
</dbReference>
<dbReference type="PANTHER" id="PTHR10505">
    <property type="entry name" value="CALCITONIN-RELATED"/>
    <property type="match status" value="1"/>
</dbReference>
<dbReference type="Pfam" id="PF00214">
    <property type="entry name" value="Calc_CGRP_IAPP"/>
    <property type="match status" value="1"/>
</dbReference>
<dbReference type="PRINTS" id="PR00817">
    <property type="entry name" value="CALCITONINB"/>
</dbReference>
<dbReference type="SMART" id="SM00113">
    <property type="entry name" value="CALCITONIN"/>
    <property type="match status" value="1"/>
</dbReference>
<dbReference type="PROSITE" id="PS00258">
    <property type="entry name" value="CALCITONIN"/>
    <property type="match status" value="1"/>
</dbReference>
<sequence>MGFWKFSPFLVLGILALYQVGFLQAAPFRSALENPPDSGVRNEEELRLLLAAVMKDYMQMKTHELEQEQETEGSRVAVQKRSCNSATCVAHWLGGLLSRAGSVANTNLLPTSMGFKVYNRRRRELKA</sequence>
<feature type="signal peptide" evidence="2">
    <location>
        <begin position="1"/>
        <end position="25"/>
    </location>
</feature>
<feature type="propeptide" id="PRO_0000353072" evidence="1">
    <location>
        <begin position="26"/>
        <end position="79"/>
    </location>
</feature>
<feature type="peptide" id="PRO_0000353073" description="Calcitonin receptor-stimulating peptide 1">
    <location>
        <begin position="82"/>
        <end position="127"/>
    </location>
</feature>
<feature type="disulfide bond" evidence="1">
    <location>
        <begin position="83"/>
        <end position="88"/>
    </location>
</feature>
<accession>Q75V94</accession>
<evidence type="ECO:0000250" key="1"/>
<evidence type="ECO:0000255" key="2"/>
<evidence type="ECO:0000269" key="3">
    <source>
    </source>
</evidence>
<evidence type="ECO:0000305" key="4"/>
<reference key="1">
    <citation type="journal article" date="2004" name="Biochem. Biophys. Res. Commun.">
        <title>Identification, structural determination, and biological activity of bovine and canine calcitonin receptor-stimulating peptides.</title>
        <authorList>
            <person name="Katafuchi T."/>
            <person name="Hamano K."/>
            <person name="Minamino N."/>
        </authorList>
    </citation>
    <scope>NUCLEOTIDE SEQUENCE [MRNA]</scope>
    <scope>FUNCTION</scope>
    <source>
        <tissue>Thyroid</tissue>
    </source>
</reference>
<name>CRSP1_CANLF</name>
<protein>
    <recommendedName>
        <fullName>Calcitonin receptor-stimulating peptide 1</fullName>
        <shortName>CRSP-1</shortName>
    </recommendedName>
</protein>
<organism>
    <name type="scientific">Canis lupus familiaris</name>
    <name type="common">Dog</name>
    <name type="synonym">Canis familiaris</name>
    <dbReference type="NCBI Taxonomy" id="9615"/>
    <lineage>
        <taxon>Eukaryota</taxon>
        <taxon>Metazoa</taxon>
        <taxon>Chordata</taxon>
        <taxon>Craniata</taxon>
        <taxon>Vertebrata</taxon>
        <taxon>Euteleostomi</taxon>
        <taxon>Mammalia</taxon>
        <taxon>Eutheria</taxon>
        <taxon>Laurasiatheria</taxon>
        <taxon>Carnivora</taxon>
        <taxon>Caniformia</taxon>
        <taxon>Canidae</taxon>
        <taxon>Canis</taxon>
    </lineage>
</organism>
<comment type="function">
    <text evidence="3">Stimulates cAMP production in porcine kidney cell line LLC-PK1 via the calcitonin receptor (CT) but not via the CT-like (CL) receptor.</text>
</comment>
<comment type="subcellular location">
    <subcellularLocation>
        <location evidence="1">Secreted</location>
    </subcellularLocation>
</comment>
<comment type="similarity">
    <text evidence="4">Belongs to the calcitonin family.</text>
</comment>
<proteinExistence type="evidence at transcript level"/>
<keyword id="KW-0165">Cleavage on pair of basic residues</keyword>
<keyword id="KW-1015">Disulfide bond</keyword>
<keyword id="KW-0675">Receptor</keyword>
<keyword id="KW-1185">Reference proteome</keyword>
<keyword id="KW-0964">Secreted</keyword>
<keyword id="KW-0732">Signal</keyword>
<gene>
    <name type="primary">CRSP1</name>
</gene>